<gene>
    <name type="primary">MT-ND4</name>
    <name type="synonym">MTND4</name>
    <name type="synonym">NADH4</name>
    <name type="synonym">ND4</name>
</gene>
<reference key="1">
    <citation type="journal article" date="1998" name="Proc. R. Soc. B">
        <title>Analyses of mitochondrial genomes strongly support a hippopotamus-whale clade.</title>
        <authorList>
            <person name="Ursing B.M."/>
            <person name="Arnason U."/>
        </authorList>
    </citation>
    <scope>NUCLEOTIDE SEQUENCE [GENOMIC DNA]</scope>
</reference>
<organism>
    <name type="scientific">Hippopotamus amphibius</name>
    <name type="common">Hippopotamus</name>
    <dbReference type="NCBI Taxonomy" id="9833"/>
    <lineage>
        <taxon>Eukaryota</taxon>
        <taxon>Metazoa</taxon>
        <taxon>Chordata</taxon>
        <taxon>Craniata</taxon>
        <taxon>Vertebrata</taxon>
        <taxon>Euteleostomi</taxon>
        <taxon>Mammalia</taxon>
        <taxon>Eutheria</taxon>
        <taxon>Laurasiatheria</taxon>
        <taxon>Artiodactyla</taxon>
        <taxon>Whippomorpha</taxon>
        <taxon>Ancodonta</taxon>
        <taxon>Hippopotamidae</taxon>
        <taxon>Hippopotamus</taxon>
    </lineage>
</organism>
<keyword id="KW-0249">Electron transport</keyword>
<keyword id="KW-0472">Membrane</keyword>
<keyword id="KW-0496">Mitochondrion</keyword>
<keyword id="KW-0999">Mitochondrion inner membrane</keyword>
<keyword id="KW-0520">NAD</keyword>
<keyword id="KW-0679">Respiratory chain</keyword>
<keyword id="KW-1278">Translocase</keyword>
<keyword id="KW-0812">Transmembrane</keyword>
<keyword id="KW-1133">Transmembrane helix</keyword>
<keyword id="KW-0813">Transport</keyword>
<keyword id="KW-0830">Ubiquinone</keyword>
<comment type="function">
    <text evidence="1">Core subunit of the mitochondrial membrane respiratory chain NADH dehydrogenase (Complex I) which catalyzes electron transfer from NADH through the respiratory chain, using ubiquinone as an electron acceptor. Essential for the catalytic activity and assembly of complex I.</text>
</comment>
<comment type="catalytic activity">
    <reaction evidence="1">
        <text>a ubiquinone + NADH + 5 H(+)(in) = a ubiquinol + NAD(+) + 4 H(+)(out)</text>
        <dbReference type="Rhea" id="RHEA:29091"/>
        <dbReference type="Rhea" id="RHEA-COMP:9565"/>
        <dbReference type="Rhea" id="RHEA-COMP:9566"/>
        <dbReference type="ChEBI" id="CHEBI:15378"/>
        <dbReference type="ChEBI" id="CHEBI:16389"/>
        <dbReference type="ChEBI" id="CHEBI:17976"/>
        <dbReference type="ChEBI" id="CHEBI:57540"/>
        <dbReference type="ChEBI" id="CHEBI:57945"/>
        <dbReference type="EC" id="7.1.1.2"/>
    </reaction>
</comment>
<comment type="subunit">
    <text evidence="2">Core subunit of respiratory chain NADH dehydrogenase (Complex I) which is composed of 45 different subunits.</text>
</comment>
<comment type="subcellular location">
    <subcellularLocation>
        <location evidence="2">Mitochondrion inner membrane</location>
        <topology evidence="3">Multi-pass membrane protein</topology>
    </subcellularLocation>
</comment>
<comment type="similarity">
    <text evidence="4">Belongs to the complex I subunit 4 family.</text>
</comment>
<proteinExistence type="inferred from homology"/>
<sequence length="459" mass="51916">MLKYIIPTIMLMPLTWMSKNSMIWTNTTAHSLLISLTSLLLLNQFNDNSLNFSPMFFSDPLSTPLLILTMWLLPLMLMASQSHLLKEPPTRKKLFITMLITLQTFLIMTFSAMELILFYILFEATLIPTLIIITRWGNQTERLNAGLYFLFYTLMGSLPLLVALIYIQNITGSLNFLMLQYWTQAVSNSWSNVFLWLACMMAFMVKMPLYGLHLWLPKAHVEAPIAGSMVLAAILLKLGGYGMLRITTILNPLTEMMAYPFIMLSLWGMIMTSSICLRQTDLKSLIAYSSVSHMALVIVAILIQTPWSYMGATALMIAHGLTSSMLFCLANSNYERIHSRTMILARGLQTLLPLMAAWWLLASLTNLALPPTINLVGELLVIMSSFSWSNITIILMGTNIMITTLYSLYMLTTTQRGKYTHHINNITPSFTRENALMALHILPLLLLSLNPKIILGPLY</sequence>
<protein>
    <recommendedName>
        <fullName>NADH-ubiquinone oxidoreductase chain 4</fullName>
        <ecNumber evidence="1">7.1.1.2</ecNumber>
    </recommendedName>
    <alternativeName>
        <fullName>NADH dehydrogenase subunit 4</fullName>
    </alternativeName>
</protein>
<accession>Q9ZZY2</accession>
<geneLocation type="mitochondrion"/>
<name>NU4M_HIPAM</name>
<dbReference type="EC" id="7.1.1.2" evidence="1"/>
<dbReference type="EMBL" id="AJ010957">
    <property type="protein sequence ID" value="CAA09437.1"/>
    <property type="molecule type" value="Genomic_DNA"/>
</dbReference>
<dbReference type="RefSeq" id="NP_008799.1">
    <property type="nucleotide sequence ID" value="NC_000889.1"/>
</dbReference>
<dbReference type="SMR" id="Q9ZZY2"/>
<dbReference type="GeneID" id="808677"/>
<dbReference type="CTD" id="4538"/>
<dbReference type="GO" id="GO:0005743">
    <property type="term" value="C:mitochondrial inner membrane"/>
    <property type="evidence" value="ECO:0000250"/>
    <property type="project" value="UniProtKB"/>
</dbReference>
<dbReference type="GO" id="GO:0008137">
    <property type="term" value="F:NADH dehydrogenase (ubiquinone) activity"/>
    <property type="evidence" value="ECO:0000250"/>
    <property type="project" value="UniProtKB"/>
</dbReference>
<dbReference type="GO" id="GO:0048039">
    <property type="term" value="F:ubiquinone binding"/>
    <property type="evidence" value="ECO:0007669"/>
    <property type="project" value="TreeGrafter"/>
</dbReference>
<dbReference type="GO" id="GO:0015990">
    <property type="term" value="P:electron transport coupled proton transport"/>
    <property type="evidence" value="ECO:0007669"/>
    <property type="project" value="TreeGrafter"/>
</dbReference>
<dbReference type="GO" id="GO:0006120">
    <property type="term" value="P:mitochondrial electron transport, NADH to ubiquinone"/>
    <property type="evidence" value="ECO:0000250"/>
    <property type="project" value="UniProtKB"/>
</dbReference>
<dbReference type="GO" id="GO:0032981">
    <property type="term" value="P:mitochondrial respiratory chain complex I assembly"/>
    <property type="evidence" value="ECO:0000250"/>
    <property type="project" value="UniProtKB"/>
</dbReference>
<dbReference type="InterPro" id="IPR000260">
    <property type="entry name" value="NADH4_N"/>
</dbReference>
<dbReference type="InterPro" id="IPR010227">
    <property type="entry name" value="NADH_Q_OxRdtase_chainM/4"/>
</dbReference>
<dbReference type="InterPro" id="IPR003918">
    <property type="entry name" value="NADH_UbQ_OxRdtase"/>
</dbReference>
<dbReference type="InterPro" id="IPR001750">
    <property type="entry name" value="ND/Mrp_TM"/>
</dbReference>
<dbReference type="NCBIfam" id="TIGR01972">
    <property type="entry name" value="NDH_I_M"/>
    <property type="match status" value="1"/>
</dbReference>
<dbReference type="PANTHER" id="PTHR43507">
    <property type="entry name" value="NADH-UBIQUINONE OXIDOREDUCTASE CHAIN 4"/>
    <property type="match status" value="1"/>
</dbReference>
<dbReference type="PANTHER" id="PTHR43507:SF20">
    <property type="entry name" value="NADH-UBIQUINONE OXIDOREDUCTASE CHAIN 4"/>
    <property type="match status" value="1"/>
</dbReference>
<dbReference type="Pfam" id="PF01059">
    <property type="entry name" value="Oxidored_q5_N"/>
    <property type="match status" value="1"/>
</dbReference>
<dbReference type="Pfam" id="PF00361">
    <property type="entry name" value="Proton_antipo_M"/>
    <property type="match status" value="1"/>
</dbReference>
<dbReference type="PRINTS" id="PR01437">
    <property type="entry name" value="NUOXDRDTASE4"/>
</dbReference>
<evidence type="ECO:0000250" key="1">
    <source>
        <dbReference type="UniProtKB" id="P03905"/>
    </source>
</evidence>
<evidence type="ECO:0000250" key="2">
    <source>
        <dbReference type="UniProtKB" id="P03910"/>
    </source>
</evidence>
<evidence type="ECO:0000255" key="3"/>
<evidence type="ECO:0000305" key="4"/>
<feature type="chain" id="PRO_0000117940" description="NADH-ubiquinone oxidoreductase chain 4">
    <location>
        <begin position="1"/>
        <end position="459"/>
    </location>
</feature>
<feature type="transmembrane region" description="Helical" evidence="3">
    <location>
        <begin position="22"/>
        <end position="42"/>
    </location>
</feature>
<feature type="transmembrane region" description="Helical" evidence="3">
    <location>
        <begin position="60"/>
        <end position="80"/>
    </location>
</feature>
<feature type="transmembrane region" description="Helical" evidence="3">
    <location>
        <begin position="92"/>
        <end position="112"/>
    </location>
</feature>
<feature type="transmembrane region" description="Helical" evidence="3">
    <location>
        <begin position="113"/>
        <end position="133"/>
    </location>
</feature>
<feature type="transmembrane region" description="Helical" evidence="3">
    <location>
        <begin position="147"/>
        <end position="167"/>
    </location>
</feature>
<feature type="transmembrane region" description="Helical" evidence="3">
    <location>
        <begin position="193"/>
        <end position="213"/>
    </location>
</feature>
<feature type="transmembrane region" description="Helical" evidence="3">
    <location>
        <begin position="224"/>
        <end position="244"/>
    </location>
</feature>
<feature type="transmembrane region" description="Helical" evidence="3">
    <location>
        <begin position="257"/>
        <end position="277"/>
    </location>
</feature>
<feature type="transmembrane region" description="Helical" evidence="3">
    <location>
        <begin position="284"/>
        <end position="303"/>
    </location>
</feature>
<feature type="transmembrane region" description="Helical" evidence="3">
    <location>
        <begin position="308"/>
        <end position="330"/>
    </location>
</feature>
<feature type="transmembrane region" description="Helical" evidence="3">
    <location>
        <begin position="351"/>
        <end position="371"/>
    </location>
</feature>
<feature type="transmembrane region" description="Helical" evidence="3">
    <location>
        <begin position="391"/>
        <end position="411"/>
    </location>
</feature>